<evidence type="ECO:0000255" key="1">
    <source>
        <dbReference type="HAMAP-Rule" id="MF_00050"/>
    </source>
</evidence>
<name>EFTS_LEGPL</name>
<gene>
    <name evidence="1" type="primary">tsf</name>
    <name type="ordered locus">lpl1672</name>
</gene>
<feature type="chain" id="PRO_0000161139" description="Elongation factor Ts">
    <location>
        <begin position="1"/>
        <end position="292"/>
    </location>
</feature>
<feature type="region of interest" description="Involved in Mg(2+) ion dislocation from EF-Tu" evidence="1">
    <location>
        <begin position="82"/>
        <end position="85"/>
    </location>
</feature>
<proteinExistence type="inferred from homology"/>
<keyword id="KW-0963">Cytoplasm</keyword>
<keyword id="KW-0251">Elongation factor</keyword>
<keyword id="KW-0648">Protein biosynthesis</keyword>
<protein>
    <recommendedName>
        <fullName evidence="1">Elongation factor Ts</fullName>
        <shortName evidence="1">EF-Ts</shortName>
    </recommendedName>
</protein>
<reference key="1">
    <citation type="journal article" date="2004" name="Nat. Genet.">
        <title>Evidence in the Legionella pneumophila genome for exploitation of host cell functions and high genome plasticity.</title>
        <authorList>
            <person name="Cazalet C."/>
            <person name="Rusniok C."/>
            <person name="Brueggemann H."/>
            <person name="Zidane N."/>
            <person name="Magnier A."/>
            <person name="Ma L."/>
            <person name="Tichit M."/>
            <person name="Jarraud S."/>
            <person name="Bouchier C."/>
            <person name="Vandenesch F."/>
            <person name="Kunst F."/>
            <person name="Etienne J."/>
            <person name="Glaser P."/>
            <person name="Buchrieser C."/>
        </authorList>
    </citation>
    <scope>NUCLEOTIDE SEQUENCE [LARGE SCALE GENOMIC DNA]</scope>
    <source>
        <strain>Lens</strain>
    </source>
</reference>
<dbReference type="EMBL" id="CR628337">
    <property type="protein sequence ID" value="CAH15912.1"/>
    <property type="molecule type" value="Genomic_DNA"/>
</dbReference>
<dbReference type="RefSeq" id="WP_011215691.1">
    <property type="nucleotide sequence ID" value="NC_006369.1"/>
</dbReference>
<dbReference type="SMR" id="Q5WVY8"/>
<dbReference type="KEGG" id="lpf:lpl1672"/>
<dbReference type="LegioList" id="lpl1672"/>
<dbReference type="HOGENOM" id="CLU_047155_0_2_6"/>
<dbReference type="Proteomes" id="UP000002517">
    <property type="component" value="Chromosome"/>
</dbReference>
<dbReference type="GO" id="GO:0005737">
    <property type="term" value="C:cytoplasm"/>
    <property type="evidence" value="ECO:0007669"/>
    <property type="project" value="UniProtKB-SubCell"/>
</dbReference>
<dbReference type="GO" id="GO:0003746">
    <property type="term" value="F:translation elongation factor activity"/>
    <property type="evidence" value="ECO:0007669"/>
    <property type="project" value="UniProtKB-UniRule"/>
</dbReference>
<dbReference type="CDD" id="cd14275">
    <property type="entry name" value="UBA_EF-Ts"/>
    <property type="match status" value="1"/>
</dbReference>
<dbReference type="FunFam" id="1.10.286.20:FF:000001">
    <property type="entry name" value="Elongation factor Ts"/>
    <property type="match status" value="1"/>
</dbReference>
<dbReference type="FunFam" id="1.10.8.10:FF:000001">
    <property type="entry name" value="Elongation factor Ts"/>
    <property type="match status" value="1"/>
</dbReference>
<dbReference type="Gene3D" id="1.10.286.20">
    <property type="match status" value="1"/>
</dbReference>
<dbReference type="Gene3D" id="1.10.8.10">
    <property type="entry name" value="DNA helicase RuvA subunit, C-terminal domain"/>
    <property type="match status" value="1"/>
</dbReference>
<dbReference type="Gene3D" id="3.30.479.20">
    <property type="entry name" value="Elongation factor Ts, dimerisation domain"/>
    <property type="match status" value="2"/>
</dbReference>
<dbReference type="HAMAP" id="MF_00050">
    <property type="entry name" value="EF_Ts"/>
    <property type="match status" value="1"/>
</dbReference>
<dbReference type="InterPro" id="IPR036402">
    <property type="entry name" value="EF-Ts_dimer_sf"/>
</dbReference>
<dbReference type="InterPro" id="IPR001816">
    <property type="entry name" value="Transl_elong_EFTs/EF1B"/>
</dbReference>
<dbReference type="InterPro" id="IPR014039">
    <property type="entry name" value="Transl_elong_EFTs/EF1B_dimer"/>
</dbReference>
<dbReference type="InterPro" id="IPR018101">
    <property type="entry name" value="Transl_elong_Ts_CS"/>
</dbReference>
<dbReference type="InterPro" id="IPR009060">
    <property type="entry name" value="UBA-like_sf"/>
</dbReference>
<dbReference type="NCBIfam" id="TIGR00116">
    <property type="entry name" value="tsf"/>
    <property type="match status" value="1"/>
</dbReference>
<dbReference type="PANTHER" id="PTHR11741">
    <property type="entry name" value="ELONGATION FACTOR TS"/>
    <property type="match status" value="1"/>
</dbReference>
<dbReference type="PANTHER" id="PTHR11741:SF0">
    <property type="entry name" value="ELONGATION FACTOR TS, MITOCHONDRIAL"/>
    <property type="match status" value="1"/>
</dbReference>
<dbReference type="Pfam" id="PF00889">
    <property type="entry name" value="EF_TS"/>
    <property type="match status" value="1"/>
</dbReference>
<dbReference type="SUPFAM" id="SSF54713">
    <property type="entry name" value="Elongation factor Ts (EF-Ts), dimerisation domain"/>
    <property type="match status" value="2"/>
</dbReference>
<dbReference type="SUPFAM" id="SSF46934">
    <property type="entry name" value="UBA-like"/>
    <property type="match status" value="1"/>
</dbReference>
<dbReference type="PROSITE" id="PS01127">
    <property type="entry name" value="EF_TS_2"/>
    <property type="match status" value="1"/>
</dbReference>
<comment type="function">
    <text evidence="1">Associates with the EF-Tu.GDP complex and induces the exchange of GDP to GTP. It remains bound to the aminoacyl-tRNA.EF-Tu.GTP complex up to the GTP hydrolysis stage on the ribosome.</text>
</comment>
<comment type="subcellular location">
    <subcellularLocation>
        <location evidence="1">Cytoplasm</location>
    </subcellularLocation>
</comment>
<comment type="similarity">
    <text evidence="1">Belongs to the EF-Ts family.</text>
</comment>
<sequence>MSTISAALVMQLRERTGAGMMECKKFLIATNGDIEQAIIEMRKAGQAKADKKADRVAAEGIIVIARSSDERTAVMLEINSETDFVARDENFTNFANAVADIALTSLPKNIEDLSNQALSSGATVEQARQELVAKIGENIKLRRLEKMHCDGVIGYYLHGSRIGVMVALKNGSEALAKDIAMHVAASKPMVVSRDQVPAEAIENEREIFTAQAKESGKPQEIIDKMIDGRINKFIDEVSLLGQPYVKDPNIKVGQLLKEKNAEVISFVRYEVGEGIEKKEDNFVEEVMAQVRT</sequence>
<accession>Q5WVY8</accession>
<organism>
    <name type="scientific">Legionella pneumophila (strain Lens)</name>
    <dbReference type="NCBI Taxonomy" id="297245"/>
    <lineage>
        <taxon>Bacteria</taxon>
        <taxon>Pseudomonadati</taxon>
        <taxon>Pseudomonadota</taxon>
        <taxon>Gammaproteobacteria</taxon>
        <taxon>Legionellales</taxon>
        <taxon>Legionellaceae</taxon>
        <taxon>Legionella</taxon>
    </lineage>
</organism>